<organism>
    <name type="scientific">Saccharolobus solfataricus (strain ATCC 35092 / DSM 1617 / JCM 11322 / P2)</name>
    <name type="common">Sulfolobus solfataricus</name>
    <dbReference type="NCBI Taxonomy" id="273057"/>
    <lineage>
        <taxon>Archaea</taxon>
        <taxon>Thermoproteota</taxon>
        <taxon>Thermoprotei</taxon>
        <taxon>Sulfolobales</taxon>
        <taxon>Sulfolobaceae</taxon>
        <taxon>Saccharolobus</taxon>
    </lineage>
</organism>
<sequence length="725" mass="78466">MKYGNMKKWAPLILFLFSLLLLQGISLHASSPSFSVNASYLASLPYANSHVAVVYYQGSLYIIGGDSHSNQVWIYSNGTWNIGPSLPFSLVSPSAIVYNNTIYVMGGYNSTGINPYVLKLNGNSWVVVSEMPLPAYSPYIFVYNNAIYVIGGENTTSPAGLYFPPSNAIRLFYPNNDSWRIIGYMPVPTYGGGYVFNGTSLIIVSGYIGYSAYTNDILIYSPQNNNWTILNGVLPYWIHDSALAYYRGVLFIVGGYIYTAGSGGVNNAILAYYNGNLQRVGYLPVPVYSAGYVQVGNMLYLAGGIGSSLSDVSALQLITFNFPPLPPKITSYSAGNESVTLGWNPVRLSSGYEIIYWNNMGFNSSINVGNVTSYTVTGLKDGITYYFEVLAYNSIGYSSPSSIIALTPASVPNPPQLVSVKYGNDNVTLNWLPPTFSGGYLLLGYYVIVKNENSMVSSHFVNSTSLTISNLTPNVTYNVFIYAVNKLGNSSPLVLTVVPITKASVFAFITKLGNGILVNWTTSFPANITLELYNPNGNLISQIAAIKGNSSYLFRVPQGNYTLVIIASNSAGVSKYVYQVVYYLPPASPQVSLIGFGNNLYISWNNEANVITYLVYVNNSLVYEGPSNSIVTNISNGTYLVKVIGVNPAGSSSPGIAVIHYTGDYVTVVKMKVVNVTIVSKIASAVSGNGNNLSLGQSIVIILLAVMILLSIAIITRNRSNGFDW</sequence>
<proteinExistence type="inferred from homology"/>
<gene>
    <name type="ordered locus">SSO1033</name>
</gene>
<protein>
    <recommendedName>
        <fullName>Kelch domain-containing protein SSO1033</fullName>
    </recommendedName>
</protein>
<reference key="1">
    <citation type="journal article" date="2001" name="Proc. Natl. Acad. Sci. U.S.A.">
        <title>The complete genome of the crenarchaeon Sulfolobus solfataricus P2.</title>
        <authorList>
            <person name="She Q."/>
            <person name="Singh R.K."/>
            <person name="Confalonieri F."/>
            <person name="Zivanovic Y."/>
            <person name="Allard G."/>
            <person name="Awayez M.J."/>
            <person name="Chan-Weiher C.C.-Y."/>
            <person name="Clausen I.G."/>
            <person name="Curtis B.A."/>
            <person name="De Moors A."/>
            <person name="Erauso G."/>
            <person name="Fletcher C."/>
            <person name="Gordon P.M.K."/>
            <person name="Heikamp-de Jong I."/>
            <person name="Jeffries A.C."/>
            <person name="Kozera C.J."/>
            <person name="Medina N."/>
            <person name="Peng X."/>
            <person name="Thi-Ngoc H.P."/>
            <person name="Redder P."/>
            <person name="Schenk M.E."/>
            <person name="Theriault C."/>
            <person name="Tolstrup N."/>
            <person name="Charlebois R.L."/>
            <person name="Doolittle W.F."/>
            <person name="Duguet M."/>
            <person name="Gaasterland T."/>
            <person name="Garrett R.A."/>
            <person name="Ragan M.A."/>
            <person name="Sensen C.W."/>
            <person name="Van der Oost J."/>
        </authorList>
    </citation>
    <scope>NUCLEOTIDE SEQUENCE [LARGE SCALE GENOMIC DNA]</scope>
    <source>
        <strain>ATCC 35092 / DSM 1617 / JCM 11322 / P2</strain>
    </source>
</reference>
<feature type="signal peptide" evidence="1">
    <location>
        <begin position="1"/>
        <end position="28"/>
    </location>
</feature>
<feature type="chain" id="PRO_0000016653" description="Kelch domain-containing protein SSO1033">
    <location>
        <begin position="29"/>
        <end position="725"/>
    </location>
</feature>
<feature type="repeat" description="Kelch 1">
    <location>
        <begin position="59"/>
        <end position="100"/>
    </location>
</feature>
<feature type="repeat" description="Kelch 2">
    <location>
        <begin position="101"/>
        <end position="145"/>
    </location>
</feature>
<feature type="repeat" description="Kelch 3">
    <location>
        <begin position="146"/>
        <end position="199"/>
    </location>
</feature>
<feature type="repeat" description="Kelch 4">
    <location>
        <begin position="201"/>
        <end position="248"/>
    </location>
</feature>
<feature type="repeat" description="Kelch 5">
    <location>
        <begin position="250"/>
        <end position="297"/>
    </location>
</feature>
<feature type="repeat" description="Kelch 6">
    <location>
        <begin position="299"/>
        <end position="342"/>
    </location>
</feature>
<feature type="domain" description="Fibronectin type-III 1" evidence="2">
    <location>
        <begin position="323"/>
        <end position="410"/>
    </location>
</feature>
<feature type="domain" description="Fibronectin type-III 2" evidence="2">
    <location>
        <begin position="411"/>
        <end position="504"/>
    </location>
</feature>
<feature type="domain" description="Fibronectin type-III 3" evidence="2">
    <location>
        <begin position="505"/>
        <end position="583"/>
    </location>
</feature>
<feature type="domain" description="Fibronectin type-III 4" evidence="2">
    <location>
        <begin position="585"/>
        <end position="665"/>
    </location>
</feature>
<name>Y1033_SACS2</name>
<evidence type="ECO:0000255" key="1"/>
<evidence type="ECO:0000255" key="2">
    <source>
        <dbReference type="PROSITE-ProRule" id="PRU00316"/>
    </source>
</evidence>
<keyword id="KW-0880">Kelch repeat</keyword>
<keyword id="KW-1185">Reference proteome</keyword>
<keyword id="KW-0677">Repeat</keyword>
<keyword id="KW-0732">Signal</keyword>
<dbReference type="EMBL" id="AE006641">
    <property type="protein sequence ID" value="AAK41296.1"/>
    <property type="molecule type" value="Genomic_DNA"/>
</dbReference>
<dbReference type="PIR" id="A90255">
    <property type="entry name" value="A90255"/>
</dbReference>
<dbReference type="RefSeq" id="WP_009989202.1">
    <property type="nucleotide sequence ID" value="NC_002754.1"/>
</dbReference>
<dbReference type="SMR" id="Q97Z97"/>
<dbReference type="STRING" id="273057.SSO1033"/>
<dbReference type="PaxDb" id="273057-SSO1033"/>
<dbReference type="EnsemblBacteria" id="AAK41296">
    <property type="protein sequence ID" value="AAK41296"/>
    <property type="gene ID" value="SSO1033"/>
</dbReference>
<dbReference type="KEGG" id="sso:SSO1033"/>
<dbReference type="PATRIC" id="fig|273057.12.peg.1025"/>
<dbReference type="eggNOG" id="arCOG05978">
    <property type="taxonomic scope" value="Archaea"/>
</dbReference>
<dbReference type="HOGENOM" id="CLU_385724_0_0_2"/>
<dbReference type="InParanoid" id="Q97Z97"/>
<dbReference type="Proteomes" id="UP000001974">
    <property type="component" value="Chromosome"/>
</dbReference>
<dbReference type="CDD" id="cd00063">
    <property type="entry name" value="FN3"/>
    <property type="match status" value="2"/>
</dbReference>
<dbReference type="Gene3D" id="2.60.40.10">
    <property type="entry name" value="Immunoglobulins"/>
    <property type="match status" value="2"/>
</dbReference>
<dbReference type="Gene3D" id="2.120.10.80">
    <property type="entry name" value="Kelch-type beta propeller"/>
    <property type="match status" value="2"/>
</dbReference>
<dbReference type="InterPro" id="IPR003961">
    <property type="entry name" value="FN3_dom"/>
</dbReference>
<dbReference type="InterPro" id="IPR036116">
    <property type="entry name" value="FN3_sf"/>
</dbReference>
<dbReference type="InterPro" id="IPR013783">
    <property type="entry name" value="Ig-like_fold"/>
</dbReference>
<dbReference type="InterPro" id="IPR015915">
    <property type="entry name" value="Kelch-typ_b-propeller"/>
</dbReference>
<dbReference type="InterPro" id="IPR006652">
    <property type="entry name" value="Kelch_1"/>
</dbReference>
<dbReference type="InterPro" id="IPR050964">
    <property type="entry name" value="Striated_Muscle_Regulatory"/>
</dbReference>
<dbReference type="PANTHER" id="PTHR13817:SF166">
    <property type="entry name" value="NEURONAL IGCAM-RELATED"/>
    <property type="match status" value="1"/>
</dbReference>
<dbReference type="PANTHER" id="PTHR13817">
    <property type="entry name" value="TITIN"/>
    <property type="match status" value="1"/>
</dbReference>
<dbReference type="Pfam" id="PF00041">
    <property type="entry name" value="fn3"/>
    <property type="match status" value="2"/>
</dbReference>
<dbReference type="Pfam" id="PF01344">
    <property type="entry name" value="Kelch_1"/>
    <property type="match status" value="1"/>
</dbReference>
<dbReference type="SMART" id="SM00060">
    <property type="entry name" value="FN3"/>
    <property type="match status" value="3"/>
</dbReference>
<dbReference type="SMART" id="SM00612">
    <property type="entry name" value="Kelch"/>
    <property type="match status" value="4"/>
</dbReference>
<dbReference type="SUPFAM" id="SSF49265">
    <property type="entry name" value="Fibronectin type III"/>
    <property type="match status" value="1"/>
</dbReference>
<dbReference type="SUPFAM" id="SSF117281">
    <property type="entry name" value="Kelch motif"/>
    <property type="match status" value="1"/>
</dbReference>
<dbReference type="PROSITE" id="PS50853">
    <property type="entry name" value="FN3"/>
    <property type="match status" value="3"/>
</dbReference>
<accession>Q97Z97</accession>